<feature type="chain" id="PRO_0000125157" description="Large ribosomal subunit protein uL22">
    <location>
        <begin position="1"/>
        <end position="111"/>
    </location>
</feature>
<dbReference type="EMBL" id="AE009951">
    <property type="protein sequence ID" value="AAL93755.1"/>
    <property type="molecule type" value="Genomic_DNA"/>
</dbReference>
<dbReference type="RefSeq" id="NP_602456.1">
    <property type="nucleotide sequence ID" value="NC_003454.1"/>
</dbReference>
<dbReference type="RefSeq" id="WP_005897300.1">
    <property type="nucleotide sequence ID" value="NZ_OZ209243.1"/>
</dbReference>
<dbReference type="SMR" id="Q8RIG0"/>
<dbReference type="FunCoup" id="Q8RIG0">
    <property type="interactions" value="371"/>
</dbReference>
<dbReference type="STRING" id="190304.FN1640"/>
<dbReference type="PaxDb" id="190304-FN1640"/>
<dbReference type="EnsemblBacteria" id="AAL93755">
    <property type="protein sequence ID" value="AAL93755"/>
    <property type="gene ID" value="FN1640"/>
</dbReference>
<dbReference type="GeneID" id="79799763"/>
<dbReference type="KEGG" id="fnu:FN1640"/>
<dbReference type="PATRIC" id="fig|190304.8.peg.133"/>
<dbReference type="eggNOG" id="COG0091">
    <property type="taxonomic scope" value="Bacteria"/>
</dbReference>
<dbReference type="HOGENOM" id="CLU_083987_3_3_0"/>
<dbReference type="InParanoid" id="Q8RIG0"/>
<dbReference type="BioCyc" id="FNUC190304:G1FZS-143-MONOMER"/>
<dbReference type="Proteomes" id="UP000002521">
    <property type="component" value="Chromosome"/>
</dbReference>
<dbReference type="GO" id="GO:0022625">
    <property type="term" value="C:cytosolic large ribosomal subunit"/>
    <property type="evidence" value="ECO:0000318"/>
    <property type="project" value="GO_Central"/>
</dbReference>
<dbReference type="GO" id="GO:0019843">
    <property type="term" value="F:rRNA binding"/>
    <property type="evidence" value="ECO:0007669"/>
    <property type="project" value="UniProtKB-UniRule"/>
</dbReference>
<dbReference type="GO" id="GO:0003735">
    <property type="term" value="F:structural constituent of ribosome"/>
    <property type="evidence" value="ECO:0000318"/>
    <property type="project" value="GO_Central"/>
</dbReference>
<dbReference type="GO" id="GO:0006412">
    <property type="term" value="P:translation"/>
    <property type="evidence" value="ECO:0000318"/>
    <property type="project" value="GO_Central"/>
</dbReference>
<dbReference type="CDD" id="cd00336">
    <property type="entry name" value="Ribosomal_L22"/>
    <property type="match status" value="1"/>
</dbReference>
<dbReference type="FunFam" id="3.90.470.10:FF:000001">
    <property type="entry name" value="50S ribosomal protein L22"/>
    <property type="match status" value="1"/>
</dbReference>
<dbReference type="Gene3D" id="3.90.470.10">
    <property type="entry name" value="Ribosomal protein L22/L17"/>
    <property type="match status" value="1"/>
</dbReference>
<dbReference type="HAMAP" id="MF_01331_B">
    <property type="entry name" value="Ribosomal_uL22_B"/>
    <property type="match status" value="1"/>
</dbReference>
<dbReference type="InterPro" id="IPR001063">
    <property type="entry name" value="Ribosomal_uL22"/>
</dbReference>
<dbReference type="InterPro" id="IPR005727">
    <property type="entry name" value="Ribosomal_uL22_bac/chlpt-type"/>
</dbReference>
<dbReference type="InterPro" id="IPR047867">
    <property type="entry name" value="Ribosomal_uL22_bac/org-type"/>
</dbReference>
<dbReference type="InterPro" id="IPR018260">
    <property type="entry name" value="Ribosomal_uL22_CS"/>
</dbReference>
<dbReference type="InterPro" id="IPR036394">
    <property type="entry name" value="Ribosomal_uL22_sf"/>
</dbReference>
<dbReference type="NCBIfam" id="TIGR01044">
    <property type="entry name" value="rplV_bact"/>
    <property type="match status" value="1"/>
</dbReference>
<dbReference type="PANTHER" id="PTHR13501">
    <property type="entry name" value="CHLOROPLAST 50S RIBOSOMAL PROTEIN L22-RELATED"/>
    <property type="match status" value="1"/>
</dbReference>
<dbReference type="PANTHER" id="PTHR13501:SF8">
    <property type="entry name" value="LARGE RIBOSOMAL SUBUNIT PROTEIN UL22M"/>
    <property type="match status" value="1"/>
</dbReference>
<dbReference type="Pfam" id="PF00237">
    <property type="entry name" value="Ribosomal_L22"/>
    <property type="match status" value="1"/>
</dbReference>
<dbReference type="SUPFAM" id="SSF54843">
    <property type="entry name" value="Ribosomal protein L22"/>
    <property type="match status" value="1"/>
</dbReference>
<dbReference type="PROSITE" id="PS00464">
    <property type="entry name" value="RIBOSOMAL_L22"/>
    <property type="match status" value="1"/>
</dbReference>
<keyword id="KW-1185">Reference proteome</keyword>
<keyword id="KW-0687">Ribonucleoprotein</keyword>
<keyword id="KW-0689">Ribosomal protein</keyword>
<keyword id="KW-0694">RNA-binding</keyword>
<keyword id="KW-0699">rRNA-binding</keyword>
<gene>
    <name evidence="1" type="primary">rplV</name>
    <name type="ordered locus">FN1640</name>
</gene>
<evidence type="ECO:0000255" key="1">
    <source>
        <dbReference type="HAMAP-Rule" id="MF_01331"/>
    </source>
</evidence>
<evidence type="ECO:0000305" key="2"/>
<sequence length="111" mass="12258">MEAKAITRFVRLSPRKARLVADLVRGKSALEALDILEFTNKKAARVIKKTLSSAIANATNNFKMDEDKLVVSTIMVNQGPVLKRVMPRAMGRADIIRKPTAHITVAVSDEQ</sequence>
<proteinExistence type="inferred from homology"/>
<organism>
    <name type="scientific">Fusobacterium nucleatum subsp. nucleatum (strain ATCC 25586 / DSM 15643 / BCRC 10681 / CIP 101130 / JCM 8532 / KCTC 2640 / LMG 13131 / VPI 4355)</name>
    <dbReference type="NCBI Taxonomy" id="190304"/>
    <lineage>
        <taxon>Bacteria</taxon>
        <taxon>Fusobacteriati</taxon>
        <taxon>Fusobacteriota</taxon>
        <taxon>Fusobacteriia</taxon>
        <taxon>Fusobacteriales</taxon>
        <taxon>Fusobacteriaceae</taxon>
        <taxon>Fusobacterium</taxon>
    </lineage>
</organism>
<accession>Q8RIG0</accession>
<protein>
    <recommendedName>
        <fullName evidence="1">Large ribosomal subunit protein uL22</fullName>
    </recommendedName>
    <alternativeName>
        <fullName evidence="2">50S ribosomal protein L22</fullName>
    </alternativeName>
</protein>
<reference key="1">
    <citation type="journal article" date="2002" name="J. Bacteriol.">
        <title>Genome sequence and analysis of the oral bacterium Fusobacterium nucleatum strain ATCC 25586.</title>
        <authorList>
            <person name="Kapatral V."/>
            <person name="Anderson I."/>
            <person name="Ivanova N."/>
            <person name="Reznik G."/>
            <person name="Los T."/>
            <person name="Lykidis A."/>
            <person name="Bhattacharyya A."/>
            <person name="Bartman A."/>
            <person name="Gardner W."/>
            <person name="Grechkin G."/>
            <person name="Zhu L."/>
            <person name="Vasieva O."/>
            <person name="Chu L."/>
            <person name="Kogan Y."/>
            <person name="Chaga O."/>
            <person name="Goltsman E."/>
            <person name="Bernal A."/>
            <person name="Larsen N."/>
            <person name="D'Souza M."/>
            <person name="Walunas T."/>
            <person name="Pusch G."/>
            <person name="Haselkorn R."/>
            <person name="Fonstein M."/>
            <person name="Kyrpides N.C."/>
            <person name="Overbeek R."/>
        </authorList>
    </citation>
    <scope>NUCLEOTIDE SEQUENCE [LARGE SCALE GENOMIC DNA]</scope>
    <source>
        <strain>ATCC 25586 / DSM 15643 / BCRC 10681 / CIP 101130 / JCM 8532 / KCTC 2640 / LMG 13131 / VPI 4355</strain>
    </source>
</reference>
<comment type="function">
    <text evidence="1">This protein binds specifically to 23S rRNA; its binding is stimulated by other ribosomal proteins, e.g. L4, L17, and L20. It is important during the early stages of 50S assembly. It makes multiple contacts with different domains of the 23S rRNA in the assembled 50S subunit and ribosome (By similarity).</text>
</comment>
<comment type="function">
    <text evidence="1">The globular domain of the protein is located near the polypeptide exit tunnel on the outside of the subunit, while an extended beta-hairpin is found that lines the wall of the exit tunnel in the center of the 70S ribosome.</text>
</comment>
<comment type="subunit">
    <text evidence="1">Part of the 50S ribosomal subunit.</text>
</comment>
<comment type="similarity">
    <text evidence="1">Belongs to the universal ribosomal protein uL22 family.</text>
</comment>
<name>RL22_FUSNN</name>